<evidence type="ECO:0000255" key="1">
    <source>
        <dbReference type="HAMAP-Rule" id="MF_01342"/>
    </source>
</evidence>
<evidence type="ECO:0000305" key="2"/>
<keyword id="KW-0687">Ribonucleoprotein</keyword>
<keyword id="KW-0689">Ribosomal protein</keyword>
<keyword id="KW-0694">RNA-binding</keyword>
<keyword id="KW-0699">rRNA-binding</keyword>
<keyword id="KW-0820">tRNA-binding</keyword>
<gene>
    <name evidence="1" type="primary">rplP</name>
    <name type="ordered locus">PAM_207</name>
</gene>
<feature type="chain" id="PRO_0000062159" description="Large ribosomal subunit protein uL16">
    <location>
        <begin position="1"/>
        <end position="140"/>
    </location>
</feature>
<name>RL16_ONYPE</name>
<proteinExistence type="inferred from homology"/>
<sequence length="140" mass="15712">MLMPKRTKYRRPHRVSFEGKSKGKNVIANGNHALVAKEGAFITNKQIEAARIAMTRYMKRTGKVWINIFPHLSLTKKPLEVRMGSGKGSPEEWVAVVKTGKVLFEVKDTTNSSKVEMEALRLASHKLPIKTKIVKKGAEV</sequence>
<organism>
    <name type="scientific">Onion yellows phytoplasma (strain OY-M)</name>
    <dbReference type="NCBI Taxonomy" id="262768"/>
    <lineage>
        <taxon>Bacteria</taxon>
        <taxon>Bacillati</taxon>
        <taxon>Mycoplasmatota</taxon>
        <taxon>Mollicutes</taxon>
        <taxon>Acholeplasmatales</taxon>
        <taxon>Acholeplasmataceae</taxon>
        <taxon>Candidatus Phytoplasma</taxon>
        <taxon>16SrI (Aster yellows group)</taxon>
    </lineage>
</organism>
<comment type="function">
    <text evidence="1">Binds 23S rRNA and is also seen to make contacts with the A and possibly P site tRNAs.</text>
</comment>
<comment type="subunit">
    <text evidence="1">Part of the 50S ribosomal subunit.</text>
</comment>
<comment type="similarity">
    <text evidence="1">Belongs to the universal ribosomal protein uL16 family.</text>
</comment>
<protein>
    <recommendedName>
        <fullName evidence="1">Large ribosomal subunit protein uL16</fullName>
    </recommendedName>
    <alternativeName>
        <fullName evidence="2">50S ribosomal protein L16</fullName>
    </alternativeName>
</protein>
<dbReference type="EMBL" id="AP006628">
    <property type="protein sequence ID" value="BAD04292.1"/>
    <property type="molecule type" value="Genomic_DNA"/>
</dbReference>
<dbReference type="SMR" id="Q6YR14"/>
<dbReference type="STRING" id="262768.PAM_207"/>
<dbReference type="KEGG" id="poy:PAM_207"/>
<dbReference type="eggNOG" id="COG0197">
    <property type="taxonomic scope" value="Bacteria"/>
</dbReference>
<dbReference type="HOGENOM" id="CLU_078858_2_1_14"/>
<dbReference type="BioCyc" id="OYEL262768:G1G26-253-MONOMER"/>
<dbReference type="Proteomes" id="UP000002523">
    <property type="component" value="Chromosome"/>
</dbReference>
<dbReference type="GO" id="GO:0022625">
    <property type="term" value="C:cytosolic large ribosomal subunit"/>
    <property type="evidence" value="ECO:0007669"/>
    <property type="project" value="TreeGrafter"/>
</dbReference>
<dbReference type="GO" id="GO:0019843">
    <property type="term" value="F:rRNA binding"/>
    <property type="evidence" value="ECO:0007669"/>
    <property type="project" value="UniProtKB-UniRule"/>
</dbReference>
<dbReference type="GO" id="GO:0003735">
    <property type="term" value="F:structural constituent of ribosome"/>
    <property type="evidence" value="ECO:0007669"/>
    <property type="project" value="InterPro"/>
</dbReference>
<dbReference type="GO" id="GO:0000049">
    <property type="term" value="F:tRNA binding"/>
    <property type="evidence" value="ECO:0007669"/>
    <property type="project" value="UniProtKB-KW"/>
</dbReference>
<dbReference type="GO" id="GO:0006412">
    <property type="term" value="P:translation"/>
    <property type="evidence" value="ECO:0007669"/>
    <property type="project" value="UniProtKB-UniRule"/>
</dbReference>
<dbReference type="CDD" id="cd01433">
    <property type="entry name" value="Ribosomal_L16_L10e"/>
    <property type="match status" value="1"/>
</dbReference>
<dbReference type="FunFam" id="3.90.1170.10:FF:000001">
    <property type="entry name" value="50S ribosomal protein L16"/>
    <property type="match status" value="1"/>
</dbReference>
<dbReference type="Gene3D" id="3.90.1170.10">
    <property type="entry name" value="Ribosomal protein L10e/L16"/>
    <property type="match status" value="1"/>
</dbReference>
<dbReference type="HAMAP" id="MF_01342">
    <property type="entry name" value="Ribosomal_uL16"/>
    <property type="match status" value="1"/>
</dbReference>
<dbReference type="InterPro" id="IPR047873">
    <property type="entry name" value="Ribosomal_uL16"/>
</dbReference>
<dbReference type="InterPro" id="IPR000114">
    <property type="entry name" value="Ribosomal_uL16_bact-type"/>
</dbReference>
<dbReference type="InterPro" id="IPR020798">
    <property type="entry name" value="Ribosomal_uL16_CS"/>
</dbReference>
<dbReference type="InterPro" id="IPR016180">
    <property type="entry name" value="Ribosomal_uL16_dom"/>
</dbReference>
<dbReference type="InterPro" id="IPR036920">
    <property type="entry name" value="Ribosomal_uL16_sf"/>
</dbReference>
<dbReference type="NCBIfam" id="TIGR01164">
    <property type="entry name" value="rplP_bact"/>
    <property type="match status" value="1"/>
</dbReference>
<dbReference type="PANTHER" id="PTHR12220">
    <property type="entry name" value="50S/60S RIBOSOMAL PROTEIN L16"/>
    <property type="match status" value="1"/>
</dbReference>
<dbReference type="PANTHER" id="PTHR12220:SF13">
    <property type="entry name" value="LARGE RIBOSOMAL SUBUNIT PROTEIN UL16M"/>
    <property type="match status" value="1"/>
</dbReference>
<dbReference type="Pfam" id="PF00252">
    <property type="entry name" value="Ribosomal_L16"/>
    <property type="match status" value="1"/>
</dbReference>
<dbReference type="PRINTS" id="PR00060">
    <property type="entry name" value="RIBOSOMALL16"/>
</dbReference>
<dbReference type="SUPFAM" id="SSF54686">
    <property type="entry name" value="Ribosomal protein L16p/L10e"/>
    <property type="match status" value="1"/>
</dbReference>
<dbReference type="PROSITE" id="PS00586">
    <property type="entry name" value="RIBOSOMAL_L16_1"/>
    <property type="match status" value="1"/>
</dbReference>
<dbReference type="PROSITE" id="PS00701">
    <property type="entry name" value="RIBOSOMAL_L16_2"/>
    <property type="match status" value="1"/>
</dbReference>
<reference key="1">
    <citation type="journal article" date="2004" name="Nat. Genet.">
        <title>Reductive evolution suggested from the complete genome sequence of a plant-pathogenic phytoplasma.</title>
        <authorList>
            <person name="Oshima K."/>
            <person name="Kakizawa S."/>
            <person name="Nishigawa H."/>
            <person name="Jung H.-Y."/>
            <person name="Wei W."/>
            <person name="Suzuki S."/>
            <person name="Arashida R."/>
            <person name="Nakata D."/>
            <person name="Miyata S."/>
            <person name="Ugaki M."/>
            <person name="Namba S."/>
        </authorList>
    </citation>
    <scope>NUCLEOTIDE SEQUENCE [LARGE SCALE GENOMIC DNA]</scope>
    <source>
        <strain>OY-M</strain>
    </source>
</reference>
<accession>Q6YR14</accession>